<comment type="function">
    <text evidence="3 5 6">Variant histone H2A which can replace H2A in some nucleosomes. Nucleosomes wrap and compact DNA into chromatin, limiting DNA accessibility to the cellular machineries which require DNA as a template. Histones thereby play a central role in transcription regulation, DNA repair, DNA replication and chromosomal stability. DNA accessibility is regulated via a complex set of post-translational modifications of histones, also called histone code, and nucleosome remodeling. Important for chromosomal structure and function, possibly including a role in controlling the fidelity of chromosomal segregation during mitosis. Plays an important role in maintaining a silenced chromatin state at centromeres and in the architecture of anaphase chromosomes.</text>
</comment>
<comment type="subunit">
    <text evidence="4">The nucleosome is a histone octamer containing two molecules each of H2A, H2B, H3 and H4 assembled in one H3-H4 heterotetramer and two H2A-H2B heterodimers. The octamer wraps approximately 147 bp of DNA. H2A or its variant H2A.Z forms a heterodimer with H2B. Component of the SWR1 and INO80 chromatin-remodeling complexes.</text>
</comment>
<comment type="interaction">
    <interactant intactId="EBI-15929575">
        <id>P48003</id>
    </interactant>
    <interactant intactId="EBI-1149594">
        <id>Q9Y7R3</id>
        <label>cnd2</label>
    </interactant>
    <organismsDiffer>false</organismsDiffer>
    <experiments>2</experiments>
</comment>
<comment type="subcellular location">
    <subcellularLocation>
        <location evidence="2">Nucleus</location>
    </subcellularLocation>
    <subcellularLocation>
        <location evidence="3 5">Chromosome</location>
    </subcellularLocation>
</comment>
<comment type="PTM">
    <text evidence="6">Acetylated at the N-terminus. N-terminal acetylation is essential for function.</text>
</comment>
<comment type="similarity">
    <text evidence="7">Belongs to the histone H2A family.</text>
</comment>
<comment type="sequence caution" evidence="7">
    <conflict type="erroneous initiation">
        <sequence resource="EMBL-CDS" id="AAB32938"/>
    </conflict>
    <text>Extended N-terminus.</text>
</comment>
<comment type="sequence caution" evidence="7">
    <conflict type="erroneous initiation">
        <sequence resource="EMBL-CDS" id="BAA21378"/>
    </conflict>
    <text>Extended N-terminus.</text>
</comment>
<accession>P48003</accession>
<organism>
    <name type="scientific">Schizosaccharomyces pombe (strain 972 / ATCC 24843)</name>
    <name type="common">Fission yeast</name>
    <dbReference type="NCBI Taxonomy" id="284812"/>
    <lineage>
        <taxon>Eukaryota</taxon>
        <taxon>Fungi</taxon>
        <taxon>Dikarya</taxon>
        <taxon>Ascomycota</taxon>
        <taxon>Taphrinomycotina</taxon>
        <taxon>Schizosaccharomycetes</taxon>
        <taxon>Schizosaccharomycetales</taxon>
        <taxon>Schizosaccharomycetaceae</taxon>
        <taxon>Schizosaccharomyces</taxon>
    </lineage>
</organism>
<protein>
    <recommendedName>
        <fullName>Histone H2A.Z</fullName>
    </recommendedName>
</protein>
<reference key="1">
    <citation type="journal article" date="1994" name="Mol. Gen. Genet.">
        <title>Analysis of a histone H2A variant from fission yeast: evidence for a role in chromosome stability.</title>
        <authorList>
            <person name="Carr A.M."/>
            <person name="Dorrington S.M."/>
            <person name="Hindley J."/>
            <person name="Phear G.A."/>
            <person name="Aves S.J."/>
            <person name="Nurse P."/>
        </authorList>
    </citation>
    <scope>NUCLEOTIDE SEQUENCE [GENOMIC DNA]</scope>
</reference>
<reference key="2">
    <citation type="journal article" date="2000" name="Yeast">
        <title>A 38 kb segment containing the cdc2 gene from the left arm of fission yeast chromosome II: sequence analysis and characterization of the genomic DNA and cDNAs encoded on the segment.</title>
        <authorList>
            <person name="Machida M."/>
            <person name="Yamazaki S."/>
            <person name="Kunihiro S."/>
            <person name="Tanaka T."/>
            <person name="Kushida N."/>
            <person name="Jinno K."/>
            <person name="Haikawa Y."/>
            <person name="Yamazaki J."/>
            <person name="Yamamoto S."/>
            <person name="Sekine M."/>
            <person name="Oguchi A."/>
            <person name="Nagai Y."/>
            <person name="Sakai M."/>
            <person name="Aoki K."/>
            <person name="Ogura K."/>
            <person name="Kudoh Y."/>
            <person name="Kikuchi H."/>
            <person name="Zhang M.Q."/>
            <person name="Yanagida M."/>
        </authorList>
    </citation>
    <scope>NUCLEOTIDE SEQUENCE [LARGE SCALE GENOMIC DNA]</scope>
    <source>
        <strain>972 / ATCC 24843</strain>
    </source>
</reference>
<reference key="3">
    <citation type="journal article" date="2002" name="Nature">
        <title>The genome sequence of Schizosaccharomyces pombe.</title>
        <authorList>
            <person name="Wood V."/>
            <person name="Gwilliam R."/>
            <person name="Rajandream M.A."/>
            <person name="Lyne M.H."/>
            <person name="Lyne R."/>
            <person name="Stewart A."/>
            <person name="Sgouros J.G."/>
            <person name="Peat N."/>
            <person name="Hayles J."/>
            <person name="Baker S.G."/>
            <person name="Basham D."/>
            <person name="Bowman S."/>
            <person name="Brooks K."/>
            <person name="Brown D."/>
            <person name="Brown S."/>
            <person name="Chillingworth T."/>
            <person name="Churcher C.M."/>
            <person name="Collins M."/>
            <person name="Connor R."/>
            <person name="Cronin A."/>
            <person name="Davis P."/>
            <person name="Feltwell T."/>
            <person name="Fraser A."/>
            <person name="Gentles S."/>
            <person name="Goble A."/>
            <person name="Hamlin N."/>
            <person name="Harris D.E."/>
            <person name="Hidalgo J."/>
            <person name="Hodgson G."/>
            <person name="Holroyd S."/>
            <person name="Hornsby T."/>
            <person name="Howarth S."/>
            <person name="Huckle E.J."/>
            <person name="Hunt S."/>
            <person name="Jagels K."/>
            <person name="James K.D."/>
            <person name="Jones L."/>
            <person name="Jones M."/>
            <person name="Leather S."/>
            <person name="McDonald S."/>
            <person name="McLean J."/>
            <person name="Mooney P."/>
            <person name="Moule S."/>
            <person name="Mungall K.L."/>
            <person name="Murphy L.D."/>
            <person name="Niblett D."/>
            <person name="Odell C."/>
            <person name="Oliver K."/>
            <person name="O'Neil S."/>
            <person name="Pearson D."/>
            <person name="Quail M.A."/>
            <person name="Rabbinowitsch E."/>
            <person name="Rutherford K.M."/>
            <person name="Rutter S."/>
            <person name="Saunders D."/>
            <person name="Seeger K."/>
            <person name="Sharp S."/>
            <person name="Skelton J."/>
            <person name="Simmonds M.N."/>
            <person name="Squares R."/>
            <person name="Squares S."/>
            <person name="Stevens K."/>
            <person name="Taylor K."/>
            <person name="Taylor R.G."/>
            <person name="Tivey A."/>
            <person name="Walsh S.V."/>
            <person name="Warren T."/>
            <person name="Whitehead S."/>
            <person name="Woodward J.R."/>
            <person name="Volckaert G."/>
            <person name="Aert R."/>
            <person name="Robben J."/>
            <person name="Grymonprez B."/>
            <person name="Weltjens I."/>
            <person name="Vanstreels E."/>
            <person name="Rieger M."/>
            <person name="Schaefer M."/>
            <person name="Mueller-Auer S."/>
            <person name="Gabel C."/>
            <person name="Fuchs M."/>
            <person name="Duesterhoeft A."/>
            <person name="Fritzc C."/>
            <person name="Holzer E."/>
            <person name="Moestl D."/>
            <person name="Hilbert H."/>
            <person name="Borzym K."/>
            <person name="Langer I."/>
            <person name="Beck A."/>
            <person name="Lehrach H."/>
            <person name="Reinhardt R."/>
            <person name="Pohl T.M."/>
            <person name="Eger P."/>
            <person name="Zimmermann W."/>
            <person name="Wedler H."/>
            <person name="Wambutt R."/>
            <person name="Purnelle B."/>
            <person name="Goffeau A."/>
            <person name="Cadieu E."/>
            <person name="Dreano S."/>
            <person name="Gloux S."/>
            <person name="Lelaure V."/>
            <person name="Mottier S."/>
            <person name="Galibert F."/>
            <person name="Aves S.J."/>
            <person name="Xiang Z."/>
            <person name="Hunt C."/>
            <person name="Moore K."/>
            <person name="Hurst S.M."/>
            <person name="Lucas M."/>
            <person name="Rochet M."/>
            <person name="Gaillardin C."/>
            <person name="Tallada V.A."/>
            <person name="Garzon A."/>
            <person name="Thode G."/>
            <person name="Daga R.R."/>
            <person name="Cruzado L."/>
            <person name="Jimenez J."/>
            <person name="Sanchez M."/>
            <person name="del Rey F."/>
            <person name="Benito J."/>
            <person name="Dominguez A."/>
            <person name="Revuelta J.L."/>
            <person name="Moreno S."/>
            <person name="Armstrong J."/>
            <person name="Forsburg S.L."/>
            <person name="Cerutti L."/>
            <person name="Lowe T."/>
            <person name="McCombie W.R."/>
            <person name="Paulsen I."/>
            <person name="Potashkin J."/>
            <person name="Shpakovski G.V."/>
            <person name="Ussery D."/>
            <person name="Barrell B.G."/>
            <person name="Nurse P."/>
        </authorList>
    </citation>
    <scope>NUCLEOTIDE SEQUENCE [LARGE SCALE GENOMIC DNA]</scope>
    <source>
        <strain>972 / ATCC 24843</strain>
    </source>
</reference>
<reference key="4">
    <citation type="journal article" date="2011" name="Science">
        <title>Comparative functional genomics of the fission yeasts.</title>
        <authorList>
            <person name="Rhind N."/>
            <person name="Chen Z."/>
            <person name="Yassour M."/>
            <person name="Thompson D.A."/>
            <person name="Haas B.J."/>
            <person name="Habib N."/>
            <person name="Wapinski I."/>
            <person name="Roy S."/>
            <person name="Lin M.F."/>
            <person name="Heiman D.I."/>
            <person name="Young S.K."/>
            <person name="Furuya K."/>
            <person name="Guo Y."/>
            <person name="Pidoux A."/>
            <person name="Chen H.M."/>
            <person name="Robbertse B."/>
            <person name="Goldberg J.M."/>
            <person name="Aoki K."/>
            <person name="Bayne E.H."/>
            <person name="Berlin A.M."/>
            <person name="Desjardins C.A."/>
            <person name="Dobbs E."/>
            <person name="Dukaj L."/>
            <person name="Fan L."/>
            <person name="FitzGerald M.G."/>
            <person name="French C."/>
            <person name="Gujja S."/>
            <person name="Hansen K."/>
            <person name="Keifenheim D."/>
            <person name="Levin J.Z."/>
            <person name="Mosher R.A."/>
            <person name="Mueller C.A."/>
            <person name="Pfiffner J."/>
            <person name="Priest M."/>
            <person name="Russ C."/>
            <person name="Smialowska A."/>
            <person name="Swoboda P."/>
            <person name="Sykes S.M."/>
            <person name="Vaughn M."/>
            <person name="Vengrova S."/>
            <person name="Yoder R."/>
            <person name="Zeng Q."/>
            <person name="Allshire R."/>
            <person name="Baulcombe D."/>
            <person name="Birren B.W."/>
            <person name="Brown W."/>
            <person name="Ekwall K."/>
            <person name="Kellis M."/>
            <person name="Leatherwood J."/>
            <person name="Levin H."/>
            <person name="Margalit H."/>
            <person name="Martienssen R."/>
            <person name="Nieduszynski C.A."/>
            <person name="Spatafora J.W."/>
            <person name="Friedman N."/>
            <person name="Dalgaard J.Z."/>
            <person name="Baumann P."/>
            <person name="Niki H."/>
            <person name="Regev A."/>
            <person name="Nusbaum C."/>
        </authorList>
    </citation>
    <scope>REVISION OF GENE MODEL</scope>
</reference>
<reference key="5">
    <citation type="journal article" date="2006" name="Nat. Biotechnol.">
        <title>ORFeome cloning and global analysis of protein localization in the fission yeast Schizosaccharomyces pombe.</title>
        <authorList>
            <person name="Matsuyama A."/>
            <person name="Arai R."/>
            <person name="Yashiroda Y."/>
            <person name="Shirai A."/>
            <person name="Kamata A."/>
            <person name="Sekido S."/>
            <person name="Kobayashi Y."/>
            <person name="Hashimoto A."/>
            <person name="Hamamoto M."/>
            <person name="Hiraoka Y."/>
            <person name="Horinouchi S."/>
            <person name="Yoshida M."/>
        </authorList>
    </citation>
    <scope>SUBCELLULAR LOCATION [LARGE SCALE ANALYSIS]</scope>
</reference>
<reference key="6">
    <citation type="journal article" date="2007" name="Genetics">
        <title>Msc1 acts through histone H2A.Z to promote chromosome stability in Schizosaccharomyces pombe.</title>
        <authorList>
            <person name="Ahmed S."/>
            <person name="Dul B."/>
            <person name="Qiu X."/>
            <person name="Walworth N.C."/>
        </authorList>
    </citation>
    <scope>FUNCTION</scope>
    <scope>SUBCELLULAR LOCATION</scope>
</reference>
<reference key="7">
    <citation type="journal article" date="2008" name="Genome Biol.">
        <title>Chromatin Central: towards the comparative proteome by accurate mapping of the yeast proteomic environment.</title>
        <authorList>
            <person name="Shevchenko A."/>
            <person name="Roguev A."/>
            <person name="Schaft D."/>
            <person name="Buchanan L."/>
            <person name="Habermann B."/>
            <person name="Sakalar C."/>
            <person name="Thomas H."/>
            <person name="Krogan N.J."/>
            <person name="Shevchenko A."/>
            <person name="Stewart A.F."/>
        </authorList>
    </citation>
    <scope>IDENTIFICATION IN THE SWR1 AND INO80 COMPLEXES</scope>
    <scope>IDENTIFICATION BY MASS SPECTROMETRY</scope>
</reference>
<reference key="8">
    <citation type="journal article" date="2009" name="Nat. Struct. Mol. Biol.">
        <title>An acetylated form of histone H2A.Z regulates chromosome architecture in Schizosaccharomyces pombe.</title>
        <authorList>
            <person name="Kim H.S."/>
            <person name="Vanoosthuyse V."/>
            <person name="Fillingham J."/>
            <person name="Roguev A."/>
            <person name="Watt S."/>
            <person name="Kislinger T."/>
            <person name="Treyer A."/>
            <person name="Carpenter L.R."/>
            <person name="Bennett C.S."/>
            <person name="Emili A."/>
            <person name="Greenblatt J.F."/>
            <person name="Hardwick K.G."/>
            <person name="Krogan N.J."/>
            <person name="Bahler J."/>
            <person name="Keogh M.C."/>
        </authorList>
    </citation>
    <scope>ACETYLATION</scope>
    <scope>FUNCTION</scope>
</reference>
<reference key="9">
    <citation type="journal article" date="2010" name="J. Biol. Chem.">
        <title>Histone variant H2A.Z regulates centromere silencing and chromosome segregation in fission yeast.</title>
        <authorList>
            <person name="Hou H."/>
            <person name="Wang Y."/>
            <person name="Kallgren S.P."/>
            <person name="Thompson J."/>
            <person name="Yates J.R. III"/>
            <person name="Jia S."/>
        </authorList>
    </citation>
    <scope>FUNCTION</scope>
    <scope>SUBCELLULAR LOCATION</scope>
</reference>
<sequence>MSGGGKGKHVGGKGGSKIGERGQMSHSARAGLQFPVGRVRRFLKAKTQNNMRVGAKSAVYSAAVLEYLTAEVLELAGNAAKDLKVKRITPRHLQLAIRGDEELDTLIRATIAGGGVLPHINKQLLIRTKEKYPEEEEII</sequence>
<dbReference type="EMBL" id="S74633">
    <property type="protein sequence ID" value="AAB32938.1"/>
    <property type="status" value="ALT_INIT"/>
    <property type="molecule type" value="Genomic_DNA"/>
</dbReference>
<dbReference type="EMBL" id="AB004534">
    <property type="protein sequence ID" value="BAA21378.1"/>
    <property type="status" value="ALT_INIT"/>
    <property type="molecule type" value="Genomic_DNA"/>
</dbReference>
<dbReference type="EMBL" id="CU329671">
    <property type="protein sequence ID" value="CAC37514.3"/>
    <property type="molecule type" value="Genomic_DNA"/>
</dbReference>
<dbReference type="PIR" id="S52560">
    <property type="entry name" value="S52560"/>
</dbReference>
<dbReference type="RefSeq" id="NP_595630.3">
    <property type="nucleotide sequence ID" value="NM_001021524.3"/>
</dbReference>
<dbReference type="SMR" id="P48003"/>
<dbReference type="BioGRID" id="276223">
    <property type="interactions" value="242"/>
</dbReference>
<dbReference type="DIP" id="DIP-59185N"/>
<dbReference type="FunCoup" id="P48003">
    <property type="interactions" value="497"/>
</dbReference>
<dbReference type="IntAct" id="P48003">
    <property type="interactions" value="4"/>
</dbReference>
<dbReference type="STRING" id="284812.P48003"/>
<dbReference type="PaxDb" id="4896-SPBC11B10.10c.1"/>
<dbReference type="EnsemblFungi" id="SPBC11B10.10c.1">
    <property type="protein sequence ID" value="SPBC11B10.10c.1:pep"/>
    <property type="gene ID" value="SPBC11B10.10c"/>
</dbReference>
<dbReference type="GeneID" id="2539668"/>
<dbReference type="KEGG" id="spo:2539668"/>
<dbReference type="PomBase" id="SPBC11B10.10c">
    <property type="gene designation" value="pht1"/>
</dbReference>
<dbReference type="VEuPathDB" id="FungiDB:SPBC11B10.10c"/>
<dbReference type="eggNOG" id="KOG1757">
    <property type="taxonomic scope" value="Eukaryota"/>
</dbReference>
<dbReference type="HOGENOM" id="CLU_062828_2_2_1"/>
<dbReference type="InParanoid" id="P48003"/>
<dbReference type="OMA" id="MNKKGAP"/>
<dbReference type="Reactome" id="R-SPO-2299718">
    <property type="pathway name" value="Condensation of Prophase Chromosomes"/>
</dbReference>
<dbReference type="Reactome" id="R-SPO-2559580">
    <property type="pathway name" value="Oxidative Stress Induced Senescence"/>
</dbReference>
<dbReference type="Reactome" id="R-SPO-427359">
    <property type="pathway name" value="SIRT1 negatively regulates rRNA expression"/>
</dbReference>
<dbReference type="Reactome" id="R-SPO-5578749">
    <property type="pathway name" value="Transcriptional regulation by small RNAs"/>
</dbReference>
<dbReference type="Reactome" id="R-SPO-5625886">
    <property type="pathway name" value="Activated PKN1 stimulates transcription of AR (androgen receptor) regulated genes KLK2 and KLK3"/>
</dbReference>
<dbReference type="Reactome" id="R-SPO-68616">
    <property type="pathway name" value="Assembly of the ORC complex at the origin of replication"/>
</dbReference>
<dbReference type="Reactome" id="R-SPO-73772">
    <property type="pathway name" value="RNA Polymerase I Promoter Escape"/>
</dbReference>
<dbReference type="PRO" id="PR:P48003"/>
<dbReference type="Proteomes" id="UP000002485">
    <property type="component" value="Chromosome II"/>
</dbReference>
<dbReference type="GO" id="GO:0000785">
    <property type="term" value="C:chromatin"/>
    <property type="evidence" value="ECO:0000314"/>
    <property type="project" value="PomBase"/>
</dbReference>
<dbReference type="GO" id="GO:0000791">
    <property type="term" value="C:euchromatin"/>
    <property type="evidence" value="ECO:0000314"/>
    <property type="project" value="PomBase"/>
</dbReference>
<dbReference type="GO" id="GO:0000786">
    <property type="term" value="C:nucleosome"/>
    <property type="evidence" value="ECO:0000318"/>
    <property type="project" value="GO_Central"/>
</dbReference>
<dbReference type="GO" id="GO:0005634">
    <property type="term" value="C:nucleus"/>
    <property type="evidence" value="ECO:0007005"/>
    <property type="project" value="PomBase"/>
</dbReference>
<dbReference type="GO" id="GO:0003677">
    <property type="term" value="F:DNA binding"/>
    <property type="evidence" value="ECO:0000255"/>
    <property type="project" value="PomBase"/>
</dbReference>
<dbReference type="GO" id="GO:0046982">
    <property type="term" value="F:protein heterodimerization activity"/>
    <property type="evidence" value="ECO:0007669"/>
    <property type="project" value="InterPro"/>
</dbReference>
<dbReference type="GO" id="GO:0030527">
    <property type="term" value="F:structural constituent of chromatin"/>
    <property type="evidence" value="ECO:0000318"/>
    <property type="project" value="GO_Central"/>
</dbReference>
<dbReference type="GO" id="GO:0140898">
    <property type="term" value="P:CENP-A eviction from euchromatin"/>
    <property type="evidence" value="ECO:0000316"/>
    <property type="project" value="PomBase"/>
</dbReference>
<dbReference type="GO" id="GO:0006325">
    <property type="term" value="P:chromatin organization"/>
    <property type="evidence" value="ECO:0000315"/>
    <property type="project" value="PomBase"/>
</dbReference>
<dbReference type="GO" id="GO:0006338">
    <property type="term" value="P:chromatin remodeling"/>
    <property type="evidence" value="ECO:0000353"/>
    <property type="project" value="PomBase"/>
</dbReference>
<dbReference type="GO" id="GO:0031507">
    <property type="term" value="P:heterochromatin formation"/>
    <property type="evidence" value="ECO:0000318"/>
    <property type="project" value="GO_Central"/>
</dbReference>
<dbReference type="CDD" id="cd00074">
    <property type="entry name" value="HFD_H2A"/>
    <property type="match status" value="1"/>
</dbReference>
<dbReference type="FunFam" id="1.10.20.10:FF:000021">
    <property type="entry name" value="Histone H2A"/>
    <property type="match status" value="1"/>
</dbReference>
<dbReference type="Gene3D" id="1.10.20.10">
    <property type="entry name" value="Histone, subunit A"/>
    <property type="match status" value="1"/>
</dbReference>
<dbReference type="InterPro" id="IPR009072">
    <property type="entry name" value="Histone-fold"/>
</dbReference>
<dbReference type="InterPro" id="IPR002119">
    <property type="entry name" value="Histone_H2A"/>
</dbReference>
<dbReference type="InterPro" id="IPR007125">
    <property type="entry name" value="Histone_H2A/H2B/H3"/>
</dbReference>
<dbReference type="InterPro" id="IPR032454">
    <property type="entry name" value="Histone_H2A_C"/>
</dbReference>
<dbReference type="InterPro" id="IPR032458">
    <property type="entry name" value="Histone_H2A_CS"/>
</dbReference>
<dbReference type="PANTHER" id="PTHR23430">
    <property type="entry name" value="HISTONE H2A"/>
    <property type="match status" value="1"/>
</dbReference>
<dbReference type="Pfam" id="PF00125">
    <property type="entry name" value="Histone"/>
    <property type="match status" value="1"/>
</dbReference>
<dbReference type="Pfam" id="PF16211">
    <property type="entry name" value="Histone_H2A_C"/>
    <property type="match status" value="1"/>
</dbReference>
<dbReference type="PRINTS" id="PR00620">
    <property type="entry name" value="HISTONEH2A"/>
</dbReference>
<dbReference type="SMART" id="SM00414">
    <property type="entry name" value="H2A"/>
    <property type="match status" value="1"/>
</dbReference>
<dbReference type="SUPFAM" id="SSF47113">
    <property type="entry name" value="Histone-fold"/>
    <property type="match status" value="1"/>
</dbReference>
<dbReference type="PROSITE" id="PS00046">
    <property type="entry name" value="HISTONE_H2A"/>
    <property type="match status" value="1"/>
</dbReference>
<evidence type="ECO:0000256" key="1">
    <source>
        <dbReference type="SAM" id="MobiDB-lite"/>
    </source>
</evidence>
<evidence type="ECO:0000269" key="2">
    <source>
    </source>
</evidence>
<evidence type="ECO:0000269" key="3">
    <source>
    </source>
</evidence>
<evidence type="ECO:0000269" key="4">
    <source>
    </source>
</evidence>
<evidence type="ECO:0000269" key="5">
    <source>
    </source>
</evidence>
<evidence type="ECO:0000269" key="6">
    <source>
    </source>
</evidence>
<evidence type="ECO:0000305" key="7"/>
<keyword id="KW-0007">Acetylation</keyword>
<keyword id="KW-0156">Chromatin regulator</keyword>
<keyword id="KW-0158">Chromosome</keyword>
<keyword id="KW-0238">DNA-binding</keyword>
<keyword id="KW-0544">Nucleosome core</keyword>
<keyword id="KW-0539">Nucleus</keyword>
<keyword id="KW-1185">Reference proteome</keyword>
<keyword id="KW-0804">Transcription</keyword>
<keyword id="KW-0805">Transcription regulation</keyword>
<feature type="chain" id="PRO_0000055337" description="Histone H2A.Z">
    <location>
        <begin position="1"/>
        <end position="139"/>
    </location>
</feature>
<feature type="region of interest" description="Disordered" evidence="1">
    <location>
        <begin position="1"/>
        <end position="27"/>
    </location>
</feature>
<feature type="compositionally biased region" description="Basic residues" evidence="1">
    <location>
        <begin position="1"/>
        <end position="11"/>
    </location>
</feature>
<name>H2AZ_SCHPO</name>
<gene>
    <name type="primary">pht1</name>
    <name type="ORF">pi001</name>
    <name type="ORF">SPBC11B10.10c</name>
</gene>
<proteinExistence type="evidence at protein level"/>